<feature type="chain" id="PRO_0000070666" description="HTH-type transcriptional regulator Rv1816">
    <location>
        <begin position="1"/>
        <end position="234"/>
    </location>
</feature>
<feature type="domain" description="HTH tetR-type" evidence="1">
    <location>
        <begin position="15"/>
        <end position="75"/>
    </location>
</feature>
<feature type="DNA-binding region" description="H-T-H motif" evidence="1">
    <location>
        <begin position="38"/>
        <end position="57"/>
    </location>
</feature>
<feature type="helix" evidence="6">
    <location>
        <begin position="14"/>
        <end position="32"/>
    </location>
</feature>
<feature type="turn" evidence="6">
    <location>
        <begin position="33"/>
        <end position="36"/>
    </location>
</feature>
<feature type="helix" evidence="6">
    <location>
        <begin position="39"/>
        <end position="45"/>
    </location>
</feature>
<feature type="helix" evidence="6">
    <location>
        <begin position="50"/>
        <end position="53"/>
    </location>
</feature>
<feature type="turn" evidence="6">
    <location>
        <begin position="54"/>
        <end position="56"/>
    </location>
</feature>
<feature type="helix" evidence="6">
    <location>
        <begin position="60"/>
        <end position="84"/>
    </location>
</feature>
<feature type="helix" evidence="6">
    <location>
        <begin position="91"/>
        <end position="108"/>
    </location>
</feature>
<feature type="helix" evidence="6">
    <location>
        <begin position="110"/>
        <end position="117"/>
    </location>
</feature>
<feature type="helix" evidence="6">
    <location>
        <begin position="128"/>
        <end position="131"/>
    </location>
</feature>
<feature type="helix" evidence="6">
    <location>
        <begin position="134"/>
        <end position="136"/>
    </location>
</feature>
<feature type="helix" evidence="6">
    <location>
        <begin position="137"/>
        <end position="151"/>
    </location>
</feature>
<feature type="helix" evidence="6">
    <location>
        <begin position="166"/>
        <end position="177"/>
    </location>
</feature>
<feature type="helix" evidence="6">
    <location>
        <begin position="183"/>
        <end position="204"/>
    </location>
</feature>
<feature type="strand" evidence="6">
    <location>
        <begin position="210"/>
        <end position="212"/>
    </location>
</feature>
<feature type="helix" evidence="6">
    <location>
        <begin position="216"/>
        <end position="231"/>
    </location>
</feature>
<protein>
    <recommendedName>
        <fullName evidence="4">HTH-type transcriptional regulator Rv1816</fullName>
    </recommendedName>
</protein>
<sequence length="234" mass="25353">MCQTCRVGKRRDAREQIEAKIVELGRRQLLDHGAAGLSLRAIARNLGMVSSAVYRYVSSRDELLTLLLVDAYSDLADTVDRARDDTVADSWSDDVIAIARAVRGWAVTNPARWALLYGSPVPGYHAPPDRTAGVATRVVGAFFDAIAAGIATGDIRLTDDVAPQPMSSDFEKIRQEFGFPGDDRVVTKCFLLWAGVVGAISLEVFGQYGADMLTDPGVVFDAQTRLLVAVLAEH</sequence>
<dbReference type="EMBL" id="AL123456">
    <property type="protein sequence ID" value="CCP44582.1"/>
    <property type="molecule type" value="Genomic_DNA"/>
</dbReference>
<dbReference type="PIR" id="A70720">
    <property type="entry name" value="A70720"/>
</dbReference>
<dbReference type="RefSeq" id="NP_216332.1">
    <property type="nucleotide sequence ID" value="NC_000962.3"/>
</dbReference>
<dbReference type="RefSeq" id="WP_003409205.1">
    <property type="nucleotide sequence ID" value="NC_000962.3"/>
</dbReference>
<dbReference type="PDB" id="5D1R">
    <property type="method" value="X-ray"/>
    <property type="resolution" value="2.00 A"/>
    <property type="chains" value="A/B=1-234"/>
</dbReference>
<dbReference type="PDBsum" id="5D1R"/>
<dbReference type="SMR" id="P9WMC9"/>
<dbReference type="FunCoup" id="P9WMC9">
    <property type="interactions" value="1"/>
</dbReference>
<dbReference type="STRING" id="83332.Rv1816"/>
<dbReference type="PaxDb" id="83332-Rv1816"/>
<dbReference type="DNASU" id="885340"/>
<dbReference type="GeneID" id="885340"/>
<dbReference type="KEGG" id="mtu:Rv1816"/>
<dbReference type="KEGG" id="mtv:RVBD_1816"/>
<dbReference type="TubercuList" id="Rv1816"/>
<dbReference type="eggNOG" id="COG1309">
    <property type="taxonomic scope" value="Bacteria"/>
</dbReference>
<dbReference type="InParanoid" id="P9WMC9"/>
<dbReference type="OrthoDB" id="3210322at2"/>
<dbReference type="PhylomeDB" id="P9WMC9"/>
<dbReference type="EvolutionaryTrace" id="P9WMC9"/>
<dbReference type="Proteomes" id="UP000001584">
    <property type="component" value="Chromosome"/>
</dbReference>
<dbReference type="GO" id="GO:0005737">
    <property type="term" value="C:cytoplasm"/>
    <property type="evidence" value="ECO:0007669"/>
    <property type="project" value="UniProtKB-SubCell"/>
</dbReference>
<dbReference type="GO" id="GO:0003700">
    <property type="term" value="F:DNA-binding transcription factor activity"/>
    <property type="evidence" value="ECO:0000318"/>
    <property type="project" value="GO_Central"/>
</dbReference>
<dbReference type="GO" id="GO:0000976">
    <property type="term" value="F:transcription cis-regulatory region binding"/>
    <property type="evidence" value="ECO:0000318"/>
    <property type="project" value="GO_Central"/>
</dbReference>
<dbReference type="GO" id="GO:0006355">
    <property type="term" value="P:regulation of DNA-templated transcription"/>
    <property type="evidence" value="ECO:0000318"/>
    <property type="project" value="GO_Central"/>
</dbReference>
<dbReference type="Gene3D" id="1.10.357.10">
    <property type="entry name" value="Tetracycline Repressor, domain 2"/>
    <property type="match status" value="1"/>
</dbReference>
<dbReference type="InterPro" id="IPR009057">
    <property type="entry name" value="Homeodomain-like_sf"/>
</dbReference>
<dbReference type="InterPro" id="IPR050109">
    <property type="entry name" value="HTH-type_TetR-like_transc_reg"/>
</dbReference>
<dbReference type="InterPro" id="IPR001647">
    <property type="entry name" value="HTH_TetR"/>
</dbReference>
<dbReference type="InterPro" id="IPR025996">
    <property type="entry name" value="MT1864/Rv1816-like_C"/>
</dbReference>
<dbReference type="InterPro" id="IPR036271">
    <property type="entry name" value="Tet_transcr_reg_TetR-rel_C_sf"/>
</dbReference>
<dbReference type="PANTHER" id="PTHR30055">
    <property type="entry name" value="HTH-TYPE TRANSCRIPTIONAL REGULATOR RUTR"/>
    <property type="match status" value="1"/>
</dbReference>
<dbReference type="PANTHER" id="PTHR30055:SF243">
    <property type="entry name" value="HTH-TYPE TRANSCRIPTIONAL REGULATOR RV1816"/>
    <property type="match status" value="1"/>
</dbReference>
<dbReference type="Pfam" id="PF13305">
    <property type="entry name" value="TetR_C_33"/>
    <property type="match status" value="1"/>
</dbReference>
<dbReference type="Pfam" id="PF00440">
    <property type="entry name" value="TetR_N"/>
    <property type="match status" value="1"/>
</dbReference>
<dbReference type="SUPFAM" id="SSF46689">
    <property type="entry name" value="Homeodomain-like"/>
    <property type="match status" value="1"/>
</dbReference>
<dbReference type="SUPFAM" id="SSF48498">
    <property type="entry name" value="Tetracyclin repressor-like, C-terminal domain"/>
    <property type="match status" value="1"/>
</dbReference>
<dbReference type="PROSITE" id="PS50977">
    <property type="entry name" value="HTH_TETR_2"/>
    <property type="match status" value="1"/>
</dbReference>
<comment type="function">
    <text evidence="3">May participate in the regulatory network that controls the expression of MmpL lipid transporters (PubMed:26396194). Binds to intragenic and/or promoter regions of rv1816, mmpL3, rv0204, mmpL11, mmpL7, kasA and mmpS3 (PubMed:26396194).</text>
</comment>
<comment type="activity regulation">
    <text evidence="3">DNA-binding activity may be regulated by fatty acids.</text>
</comment>
<comment type="subunit">
    <text evidence="3">Homodimer.</text>
</comment>
<comment type="subcellular location">
    <subcellularLocation>
        <location evidence="4">Cytoplasm</location>
    </subcellularLocation>
</comment>
<comment type="induction">
    <text evidence="2">Positively regulated by alternative sigma factor SigD.</text>
</comment>
<comment type="domain">
    <text evidence="3">Contains an N-terminal DNA-binding domain and a C-terminal ligand-binding regulatory domain (PubMed:26396194). The C-terminal regulatory domain can bind saturated fatty acids (PubMed:26396194).</text>
</comment>
<name>Y1816_MYCTU</name>
<evidence type="ECO:0000255" key="1">
    <source>
        <dbReference type="PROSITE-ProRule" id="PRU00335"/>
    </source>
</evidence>
<evidence type="ECO:0000269" key="2">
    <source>
    </source>
</evidence>
<evidence type="ECO:0000269" key="3">
    <source>
    </source>
</evidence>
<evidence type="ECO:0000305" key="4"/>
<evidence type="ECO:0007744" key="5">
    <source>
        <dbReference type="PDB" id="5D1R"/>
    </source>
</evidence>
<evidence type="ECO:0007829" key="6">
    <source>
        <dbReference type="PDB" id="5D1R"/>
    </source>
</evidence>
<proteinExistence type="evidence at protein level"/>
<accession>P9WMC9</accession>
<accession>L0T7S4</accession>
<accession>P67438</accession>
<accession>Q50617</accession>
<gene>
    <name type="ordered locus">Rv1816</name>
    <name type="ORF">MTCY1A11.27c</name>
</gene>
<organism>
    <name type="scientific">Mycobacterium tuberculosis (strain ATCC 25618 / H37Rv)</name>
    <dbReference type="NCBI Taxonomy" id="83332"/>
    <lineage>
        <taxon>Bacteria</taxon>
        <taxon>Bacillati</taxon>
        <taxon>Actinomycetota</taxon>
        <taxon>Actinomycetes</taxon>
        <taxon>Mycobacteriales</taxon>
        <taxon>Mycobacteriaceae</taxon>
        <taxon>Mycobacterium</taxon>
        <taxon>Mycobacterium tuberculosis complex</taxon>
    </lineage>
</organism>
<reference key="1">
    <citation type="journal article" date="1998" name="Nature">
        <title>Deciphering the biology of Mycobacterium tuberculosis from the complete genome sequence.</title>
        <authorList>
            <person name="Cole S.T."/>
            <person name="Brosch R."/>
            <person name="Parkhill J."/>
            <person name="Garnier T."/>
            <person name="Churcher C.M."/>
            <person name="Harris D.E."/>
            <person name="Gordon S.V."/>
            <person name="Eiglmeier K."/>
            <person name="Gas S."/>
            <person name="Barry C.E. III"/>
            <person name="Tekaia F."/>
            <person name="Badcock K."/>
            <person name="Basham D."/>
            <person name="Brown D."/>
            <person name="Chillingworth T."/>
            <person name="Connor R."/>
            <person name="Davies R.M."/>
            <person name="Devlin K."/>
            <person name="Feltwell T."/>
            <person name="Gentles S."/>
            <person name="Hamlin N."/>
            <person name="Holroyd S."/>
            <person name="Hornsby T."/>
            <person name="Jagels K."/>
            <person name="Krogh A."/>
            <person name="McLean J."/>
            <person name="Moule S."/>
            <person name="Murphy L.D."/>
            <person name="Oliver S."/>
            <person name="Osborne J."/>
            <person name="Quail M.A."/>
            <person name="Rajandream M.A."/>
            <person name="Rogers J."/>
            <person name="Rutter S."/>
            <person name="Seeger K."/>
            <person name="Skelton S."/>
            <person name="Squares S."/>
            <person name="Squares R."/>
            <person name="Sulston J.E."/>
            <person name="Taylor K."/>
            <person name="Whitehead S."/>
            <person name="Barrell B.G."/>
        </authorList>
    </citation>
    <scope>NUCLEOTIDE SEQUENCE [LARGE SCALE GENOMIC DNA]</scope>
    <source>
        <strain>ATCC 25618 / H37Rv</strain>
    </source>
</reference>
<reference key="2">
    <citation type="journal article" date="2004" name="J. Bacteriol.">
        <title>Transcription regulation by the Mycobacterium tuberculosis alternative sigma factor SigD and its role in virulence.</title>
        <authorList>
            <person name="Raman S."/>
            <person name="Hazra R."/>
            <person name="Dascher C.C."/>
            <person name="Husson R.N."/>
        </authorList>
    </citation>
    <scope>INDUCTION</scope>
    <source>
        <strain>ATCC 25618 / H37Rv</strain>
    </source>
</reference>
<reference key="3">
    <citation type="journal article" date="2011" name="Mol. Cell. Proteomics">
        <title>Proteogenomic analysis of Mycobacterium tuberculosis by high resolution mass spectrometry.</title>
        <authorList>
            <person name="Kelkar D.S."/>
            <person name="Kumar D."/>
            <person name="Kumar P."/>
            <person name="Balakrishnan L."/>
            <person name="Muthusamy B."/>
            <person name="Yadav A.K."/>
            <person name="Shrivastava P."/>
            <person name="Marimuthu A."/>
            <person name="Anand S."/>
            <person name="Sundaram H."/>
            <person name="Kingsbury R."/>
            <person name="Harsha H.C."/>
            <person name="Nair B."/>
            <person name="Prasad T.S."/>
            <person name="Chauhan D.S."/>
            <person name="Katoch K."/>
            <person name="Katoch V.M."/>
            <person name="Kumar P."/>
            <person name="Chaerkady R."/>
            <person name="Ramachandran S."/>
            <person name="Dash D."/>
            <person name="Pandey A."/>
        </authorList>
    </citation>
    <scope>IDENTIFICATION BY MASS SPECTROMETRY [LARGE SCALE ANALYSIS]</scope>
    <source>
        <strain>ATCC 25618 / H37Rv</strain>
    </source>
</reference>
<reference evidence="5" key="4">
    <citation type="journal article" date="2015" name="J. Biol. Chem.">
        <title>Structural basis for the regulation of the MmpL transporters of Mycobacterium tuberculosis.</title>
        <authorList>
            <person name="Delmar J.A."/>
            <person name="Chou T.H."/>
            <person name="Wright C.C."/>
            <person name="Licon M.H."/>
            <person name="Doh J.K."/>
            <person name="Radhakrishnan A."/>
            <person name="Kumar N."/>
            <person name="Lei H.T."/>
            <person name="Bolla J.R."/>
            <person name="Rajashankar K.R."/>
            <person name="Su C.C."/>
            <person name="Purdy G.E."/>
            <person name="Yu E.W."/>
        </authorList>
    </citation>
    <scope>X-RAY CRYSTALLOGRAPHY (2.00 ANGSTROMS)</scope>
    <scope>FUNCTION</scope>
    <scope>DNA-BINDING</scope>
    <scope>ACTIVITY REGULATION</scope>
    <scope>SUBUNIT</scope>
    <scope>DOMAIN</scope>
    <source>
        <strain>H37Rv</strain>
    </source>
</reference>
<keyword id="KW-0002">3D-structure</keyword>
<keyword id="KW-0963">Cytoplasm</keyword>
<keyword id="KW-0238">DNA-binding</keyword>
<keyword id="KW-1185">Reference proteome</keyword>
<keyword id="KW-0804">Transcription</keyword>
<keyword id="KW-0805">Transcription regulation</keyword>